<keyword id="KW-0067">ATP-binding</keyword>
<keyword id="KW-0418">Kinase</keyword>
<keyword id="KW-0545">Nucleotide biosynthesis</keyword>
<keyword id="KW-0547">Nucleotide-binding</keyword>
<keyword id="KW-0808">Transferase</keyword>
<gene>
    <name evidence="1" type="primary">tmk</name>
    <name type="ordered locus">Dvul_1092</name>
</gene>
<sequence length="224" mass="24098">MFITFEGIEGSGKSTALQGLAAWLQQHGHGVAVTREPGGSRLGRTLRSILLDLGNTDITPEAELFLYLADRAQHVAQVVRPALDEGMVVLSDRYADSTVVYQGYGRGLDPMMLRQFNDVAVGGLWPDLTILLDLEPEAGLNRALARNIREGMHAAEGRFEAESLAFHTRVREGYLTWAALHGGRYRVVDATQSPEDVVRDVVGIVAAALGDVSSGEAVSGRTGA</sequence>
<proteinExistence type="inferred from homology"/>
<accession>A1VCE6</accession>
<dbReference type="EC" id="2.7.4.9" evidence="1"/>
<dbReference type="EMBL" id="CP000527">
    <property type="protein sequence ID" value="ABM28112.1"/>
    <property type="molecule type" value="Genomic_DNA"/>
</dbReference>
<dbReference type="RefSeq" id="WP_011792053.1">
    <property type="nucleotide sequence ID" value="NC_008751.1"/>
</dbReference>
<dbReference type="SMR" id="A1VCE6"/>
<dbReference type="KEGG" id="dvl:Dvul_1092"/>
<dbReference type="HOGENOM" id="CLU_049131_0_2_7"/>
<dbReference type="Proteomes" id="UP000009173">
    <property type="component" value="Chromosome"/>
</dbReference>
<dbReference type="GO" id="GO:0005829">
    <property type="term" value="C:cytosol"/>
    <property type="evidence" value="ECO:0007669"/>
    <property type="project" value="TreeGrafter"/>
</dbReference>
<dbReference type="GO" id="GO:0005524">
    <property type="term" value="F:ATP binding"/>
    <property type="evidence" value="ECO:0007669"/>
    <property type="project" value="UniProtKB-UniRule"/>
</dbReference>
<dbReference type="GO" id="GO:0004798">
    <property type="term" value="F:dTMP kinase activity"/>
    <property type="evidence" value="ECO:0007669"/>
    <property type="project" value="UniProtKB-UniRule"/>
</dbReference>
<dbReference type="GO" id="GO:0006233">
    <property type="term" value="P:dTDP biosynthetic process"/>
    <property type="evidence" value="ECO:0007669"/>
    <property type="project" value="InterPro"/>
</dbReference>
<dbReference type="GO" id="GO:0006235">
    <property type="term" value="P:dTTP biosynthetic process"/>
    <property type="evidence" value="ECO:0007669"/>
    <property type="project" value="UniProtKB-UniRule"/>
</dbReference>
<dbReference type="GO" id="GO:0006227">
    <property type="term" value="P:dUDP biosynthetic process"/>
    <property type="evidence" value="ECO:0007669"/>
    <property type="project" value="TreeGrafter"/>
</dbReference>
<dbReference type="CDD" id="cd01672">
    <property type="entry name" value="TMPK"/>
    <property type="match status" value="1"/>
</dbReference>
<dbReference type="FunFam" id="3.40.50.300:FF:000225">
    <property type="entry name" value="Thymidylate kinase"/>
    <property type="match status" value="1"/>
</dbReference>
<dbReference type="Gene3D" id="3.40.50.300">
    <property type="entry name" value="P-loop containing nucleotide triphosphate hydrolases"/>
    <property type="match status" value="1"/>
</dbReference>
<dbReference type="HAMAP" id="MF_00165">
    <property type="entry name" value="Thymidylate_kinase"/>
    <property type="match status" value="1"/>
</dbReference>
<dbReference type="InterPro" id="IPR027417">
    <property type="entry name" value="P-loop_NTPase"/>
</dbReference>
<dbReference type="InterPro" id="IPR039430">
    <property type="entry name" value="Thymidylate_kin-like_dom"/>
</dbReference>
<dbReference type="InterPro" id="IPR018095">
    <property type="entry name" value="Thymidylate_kin_CS"/>
</dbReference>
<dbReference type="InterPro" id="IPR018094">
    <property type="entry name" value="Thymidylate_kinase"/>
</dbReference>
<dbReference type="NCBIfam" id="TIGR00041">
    <property type="entry name" value="DTMP_kinase"/>
    <property type="match status" value="1"/>
</dbReference>
<dbReference type="PANTHER" id="PTHR10344">
    <property type="entry name" value="THYMIDYLATE KINASE"/>
    <property type="match status" value="1"/>
</dbReference>
<dbReference type="PANTHER" id="PTHR10344:SF4">
    <property type="entry name" value="UMP-CMP KINASE 2, MITOCHONDRIAL"/>
    <property type="match status" value="1"/>
</dbReference>
<dbReference type="Pfam" id="PF02223">
    <property type="entry name" value="Thymidylate_kin"/>
    <property type="match status" value="1"/>
</dbReference>
<dbReference type="SUPFAM" id="SSF52540">
    <property type="entry name" value="P-loop containing nucleoside triphosphate hydrolases"/>
    <property type="match status" value="1"/>
</dbReference>
<dbReference type="PROSITE" id="PS01331">
    <property type="entry name" value="THYMIDYLATE_KINASE"/>
    <property type="match status" value="1"/>
</dbReference>
<protein>
    <recommendedName>
        <fullName evidence="1">Thymidylate kinase</fullName>
        <ecNumber evidence="1">2.7.4.9</ecNumber>
    </recommendedName>
    <alternativeName>
        <fullName evidence="1">dTMP kinase</fullName>
    </alternativeName>
</protein>
<feature type="chain" id="PRO_1000023185" description="Thymidylate kinase">
    <location>
        <begin position="1"/>
        <end position="224"/>
    </location>
</feature>
<feature type="binding site" evidence="1">
    <location>
        <begin position="7"/>
        <end position="14"/>
    </location>
    <ligand>
        <name>ATP</name>
        <dbReference type="ChEBI" id="CHEBI:30616"/>
    </ligand>
</feature>
<evidence type="ECO:0000255" key="1">
    <source>
        <dbReference type="HAMAP-Rule" id="MF_00165"/>
    </source>
</evidence>
<name>KTHY_NITV4</name>
<organism>
    <name type="scientific">Nitratidesulfovibrio vulgaris (strain DP4)</name>
    <name type="common">Desulfovibrio vulgaris</name>
    <dbReference type="NCBI Taxonomy" id="391774"/>
    <lineage>
        <taxon>Bacteria</taxon>
        <taxon>Pseudomonadati</taxon>
        <taxon>Thermodesulfobacteriota</taxon>
        <taxon>Desulfovibrionia</taxon>
        <taxon>Desulfovibrionales</taxon>
        <taxon>Desulfovibrionaceae</taxon>
        <taxon>Nitratidesulfovibrio</taxon>
    </lineage>
</organism>
<reference key="1">
    <citation type="journal article" date="2009" name="Environ. Microbiol.">
        <title>Contribution of mobile genetic elements to Desulfovibrio vulgaris genome plasticity.</title>
        <authorList>
            <person name="Walker C.B."/>
            <person name="Stolyar S."/>
            <person name="Chivian D."/>
            <person name="Pinel N."/>
            <person name="Gabster J.A."/>
            <person name="Dehal P.S."/>
            <person name="He Z."/>
            <person name="Yang Z.K."/>
            <person name="Yen H.C."/>
            <person name="Zhou J."/>
            <person name="Wall J.D."/>
            <person name="Hazen T.C."/>
            <person name="Arkin A.P."/>
            <person name="Stahl D.A."/>
        </authorList>
    </citation>
    <scope>NUCLEOTIDE SEQUENCE [LARGE SCALE GENOMIC DNA]</scope>
    <source>
        <strain>DP4</strain>
    </source>
</reference>
<comment type="function">
    <text evidence="1">Phosphorylation of dTMP to form dTDP in both de novo and salvage pathways of dTTP synthesis.</text>
</comment>
<comment type="catalytic activity">
    <reaction evidence="1">
        <text>dTMP + ATP = dTDP + ADP</text>
        <dbReference type="Rhea" id="RHEA:13517"/>
        <dbReference type="ChEBI" id="CHEBI:30616"/>
        <dbReference type="ChEBI" id="CHEBI:58369"/>
        <dbReference type="ChEBI" id="CHEBI:63528"/>
        <dbReference type="ChEBI" id="CHEBI:456216"/>
        <dbReference type="EC" id="2.7.4.9"/>
    </reaction>
</comment>
<comment type="similarity">
    <text evidence="1">Belongs to the thymidylate kinase family.</text>
</comment>